<reference key="1">
    <citation type="journal article" date="2005" name="J. Bacteriol.">
        <title>Whole-genome sequencing of Staphylococcus haemolyticus uncovers the extreme plasticity of its genome and the evolution of human-colonizing staphylococcal species.</title>
        <authorList>
            <person name="Takeuchi F."/>
            <person name="Watanabe S."/>
            <person name="Baba T."/>
            <person name="Yuzawa H."/>
            <person name="Ito T."/>
            <person name="Morimoto Y."/>
            <person name="Kuroda M."/>
            <person name="Cui L."/>
            <person name="Takahashi M."/>
            <person name="Ankai A."/>
            <person name="Baba S."/>
            <person name="Fukui S."/>
            <person name="Lee J.C."/>
            <person name="Hiramatsu K."/>
        </authorList>
    </citation>
    <scope>NUCLEOTIDE SEQUENCE [LARGE SCALE GENOMIC DNA]</scope>
    <source>
        <strain>JCSC1435</strain>
    </source>
</reference>
<dbReference type="EC" id="7.2.2.8"/>
<dbReference type="EMBL" id="AP006716">
    <property type="protein sequence ID" value="BAE03414.1"/>
    <property type="status" value="ALT_FRAME"/>
    <property type="molecule type" value="Genomic_DNA"/>
</dbReference>
<dbReference type="SMR" id="Q4LAB1"/>
<dbReference type="KEGG" id="sha:SH0105"/>
<dbReference type="eggNOG" id="COG2217">
    <property type="taxonomic scope" value="Bacteria"/>
</dbReference>
<dbReference type="HOGENOM" id="CLU_001771_6_3_9"/>
<dbReference type="Proteomes" id="UP000000543">
    <property type="component" value="Chromosome"/>
</dbReference>
<dbReference type="GO" id="GO:0005886">
    <property type="term" value="C:plasma membrane"/>
    <property type="evidence" value="ECO:0007669"/>
    <property type="project" value="UniProtKB-SubCell"/>
</dbReference>
<dbReference type="GO" id="GO:0005524">
    <property type="term" value="F:ATP binding"/>
    <property type="evidence" value="ECO:0007669"/>
    <property type="project" value="UniProtKB-KW"/>
</dbReference>
<dbReference type="GO" id="GO:0016887">
    <property type="term" value="F:ATP hydrolysis activity"/>
    <property type="evidence" value="ECO:0007669"/>
    <property type="project" value="InterPro"/>
</dbReference>
<dbReference type="GO" id="GO:0005507">
    <property type="term" value="F:copper ion binding"/>
    <property type="evidence" value="ECO:0007669"/>
    <property type="project" value="TreeGrafter"/>
</dbReference>
<dbReference type="GO" id="GO:0043682">
    <property type="term" value="F:P-type divalent copper transporter activity"/>
    <property type="evidence" value="ECO:0007669"/>
    <property type="project" value="TreeGrafter"/>
</dbReference>
<dbReference type="GO" id="GO:0140581">
    <property type="term" value="F:P-type monovalent copper transporter activity"/>
    <property type="evidence" value="ECO:0007669"/>
    <property type="project" value="UniProtKB-EC"/>
</dbReference>
<dbReference type="GO" id="GO:0055070">
    <property type="term" value="P:copper ion homeostasis"/>
    <property type="evidence" value="ECO:0007669"/>
    <property type="project" value="TreeGrafter"/>
</dbReference>
<dbReference type="CDD" id="cd07552">
    <property type="entry name" value="P-type_ATPase_Cu-like"/>
    <property type="match status" value="1"/>
</dbReference>
<dbReference type="FunFam" id="2.70.150.10:FF:000002">
    <property type="entry name" value="Copper-transporting ATPase 1, putative"/>
    <property type="match status" value="1"/>
</dbReference>
<dbReference type="Gene3D" id="3.40.1110.10">
    <property type="entry name" value="Calcium-transporting ATPase, cytoplasmic domain N"/>
    <property type="match status" value="1"/>
</dbReference>
<dbReference type="Gene3D" id="2.70.150.10">
    <property type="entry name" value="Calcium-transporting ATPase, cytoplasmic transduction domain A"/>
    <property type="match status" value="1"/>
</dbReference>
<dbReference type="Gene3D" id="3.40.50.1000">
    <property type="entry name" value="HAD superfamily/HAD-like"/>
    <property type="match status" value="1"/>
</dbReference>
<dbReference type="InterPro" id="IPR023299">
    <property type="entry name" value="ATPase_P-typ_cyto_dom_N"/>
</dbReference>
<dbReference type="InterPro" id="IPR018303">
    <property type="entry name" value="ATPase_P-typ_P_site"/>
</dbReference>
<dbReference type="InterPro" id="IPR023298">
    <property type="entry name" value="ATPase_P-typ_TM_dom_sf"/>
</dbReference>
<dbReference type="InterPro" id="IPR008250">
    <property type="entry name" value="ATPase_P-typ_transduc_dom_A_sf"/>
</dbReference>
<dbReference type="InterPro" id="IPR036412">
    <property type="entry name" value="HAD-like_sf"/>
</dbReference>
<dbReference type="InterPro" id="IPR023214">
    <property type="entry name" value="HAD_sf"/>
</dbReference>
<dbReference type="InterPro" id="IPR027256">
    <property type="entry name" value="P-typ_ATPase_IB"/>
</dbReference>
<dbReference type="InterPro" id="IPR001757">
    <property type="entry name" value="P_typ_ATPase"/>
</dbReference>
<dbReference type="InterPro" id="IPR044492">
    <property type="entry name" value="P_typ_ATPase_HD_dom"/>
</dbReference>
<dbReference type="NCBIfam" id="TIGR01511">
    <property type="entry name" value="ATPase-IB1_Cu"/>
    <property type="match status" value="1"/>
</dbReference>
<dbReference type="NCBIfam" id="TIGR01525">
    <property type="entry name" value="ATPase-IB_hvy"/>
    <property type="match status" value="1"/>
</dbReference>
<dbReference type="NCBIfam" id="TIGR01494">
    <property type="entry name" value="ATPase_P-type"/>
    <property type="match status" value="1"/>
</dbReference>
<dbReference type="PANTHER" id="PTHR43520">
    <property type="entry name" value="ATP7, ISOFORM B"/>
    <property type="match status" value="1"/>
</dbReference>
<dbReference type="PANTHER" id="PTHR43520:SF5">
    <property type="entry name" value="CATION-TRANSPORTING P-TYPE ATPASE-RELATED"/>
    <property type="match status" value="1"/>
</dbReference>
<dbReference type="Pfam" id="PF00122">
    <property type="entry name" value="E1-E2_ATPase"/>
    <property type="match status" value="1"/>
</dbReference>
<dbReference type="Pfam" id="PF00702">
    <property type="entry name" value="Hydrolase"/>
    <property type="match status" value="1"/>
</dbReference>
<dbReference type="PRINTS" id="PR00119">
    <property type="entry name" value="CATATPASE"/>
</dbReference>
<dbReference type="PRINTS" id="PR00120">
    <property type="entry name" value="HATPASE"/>
</dbReference>
<dbReference type="SFLD" id="SFLDG00002">
    <property type="entry name" value="C1.7:_P-type_atpase_like"/>
    <property type="match status" value="1"/>
</dbReference>
<dbReference type="SFLD" id="SFLDF00027">
    <property type="entry name" value="p-type_atpase"/>
    <property type="match status" value="1"/>
</dbReference>
<dbReference type="SUPFAM" id="SSF81653">
    <property type="entry name" value="Calcium ATPase, transduction domain A"/>
    <property type="match status" value="1"/>
</dbReference>
<dbReference type="SUPFAM" id="SSF81665">
    <property type="entry name" value="Calcium ATPase, transmembrane domain M"/>
    <property type="match status" value="1"/>
</dbReference>
<dbReference type="SUPFAM" id="SSF56784">
    <property type="entry name" value="HAD-like"/>
    <property type="match status" value="1"/>
</dbReference>
<dbReference type="PROSITE" id="PS00154">
    <property type="entry name" value="ATPASE_E1_E2"/>
    <property type="match status" value="1"/>
</dbReference>
<sequence>MNHSNHMHHDNHESHHHYSGHAHHHGNFKVKFFVSLIFAIPIILLSPMMGVNLPFQFTFPGSEWVVLILSTILFFYGGKPFLSGGKDEIAAKKPGMMTLVALGISVAYIYSLYAFYMNNFSSATGHTMDFFWELATLILIMLLGHWIEMNAVGNAGDALKKMAELLPNSAIKVMDNGQREEVKISDIMTDDIVEVKAGESIPTDGIIVQGQTSVDESLVTGESKKVQKNQNDNVIGGSINGSGTIQVKVTAVGEDGYLSQVMGLVNQAQNDKSSAELLSDKVAGYLFYFAVIVGVISFIVWMLIQNDVDFALERLVTVLVIACPHALGLAIPLVTARSTSIGAHNGLIIKNRESVEIAQHIDYVMMDKTGTLTEGNFSVNHYESFKNDLSNDTILSLFASLESQSNHPLAISIVDFTKSKNVSFTNPQDVNNIPGVGLEGLIDNKTYKITNVSYLDQHGFEYDNDLFIKLAQQGNSISYLIEDQQVIGMIAQGDQIKESSKQMVADLLSRHITPVMLTGDNDEVAHAVAKELGISDVHAQLMPEDKESIIKDYQSDGNKVMMVGDGINDAPSLIRADIGIAIGAGTDVAVDSGDIILVKSNPSDIIHFLTLSNNTMRKMVQNLWWGAGYNIVAVPLAAGALAFIGLILSPAVGAILMSLSTVIVAINAFTLKLK</sequence>
<gene>
    <name type="primary">copB</name>
    <name type="ordered locus">SH0105</name>
</gene>
<accession>Q4LAB1</accession>
<name>COPB_STAHJ</name>
<keyword id="KW-0067">ATP-binding</keyword>
<keyword id="KW-1003">Cell membrane</keyword>
<keyword id="KW-0186">Copper</keyword>
<keyword id="KW-0187">Copper transport</keyword>
<keyword id="KW-0406">Ion transport</keyword>
<keyword id="KW-0460">Magnesium</keyword>
<keyword id="KW-0472">Membrane</keyword>
<keyword id="KW-0479">Metal-binding</keyword>
<keyword id="KW-0547">Nucleotide-binding</keyword>
<keyword id="KW-0597">Phosphoprotein</keyword>
<keyword id="KW-1278">Translocase</keyword>
<keyword id="KW-0812">Transmembrane</keyword>
<keyword id="KW-1133">Transmembrane helix</keyword>
<keyword id="KW-0813">Transport</keyword>
<comment type="function">
    <text evidence="1">Involved in copper transport.</text>
</comment>
<comment type="catalytic activity">
    <reaction>
        <text>Cu(+)(in) + ATP + H2O = Cu(+)(out) + ADP + phosphate + H(+)</text>
        <dbReference type="Rhea" id="RHEA:25792"/>
        <dbReference type="ChEBI" id="CHEBI:15377"/>
        <dbReference type="ChEBI" id="CHEBI:15378"/>
        <dbReference type="ChEBI" id="CHEBI:30616"/>
        <dbReference type="ChEBI" id="CHEBI:43474"/>
        <dbReference type="ChEBI" id="CHEBI:49552"/>
        <dbReference type="ChEBI" id="CHEBI:456216"/>
        <dbReference type="EC" id="7.2.2.8"/>
    </reaction>
</comment>
<comment type="subcellular location">
    <subcellularLocation>
        <location evidence="1">Cell membrane</location>
        <topology evidence="1">Multi-pass membrane protein</topology>
    </subcellularLocation>
</comment>
<comment type="similarity">
    <text evidence="4">Belongs to the cation transport ATPase (P-type) (TC 3.A.3) family. Type IB subfamily.</text>
</comment>
<comment type="sequence caution" evidence="4">
    <conflict type="frameshift">
        <sequence resource="EMBL-CDS" id="BAE03414"/>
    </conflict>
</comment>
<evidence type="ECO:0000250" key="1"/>
<evidence type="ECO:0000255" key="2"/>
<evidence type="ECO:0000256" key="3">
    <source>
        <dbReference type="SAM" id="MobiDB-lite"/>
    </source>
</evidence>
<evidence type="ECO:0000305" key="4"/>
<organism>
    <name type="scientific">Staphylococcus haemolyticus (strain JCSC1435)</name>
    <dbReference type="NCBI Taxonomy" id="279808"/>
    <lineage>
        <taxon>Bacteria</taxon>
        <taxon>Bacillati</taxon>
        <taxon>Bacillota</taxon>
        <taxon>Bacilli</taxon>
        <taxon>Bacillales</taxon>
        <taxon>Staphylococcaceae</taxon>
        <taxon>Staphylococcus</taxon>
    </lineage>
</organism>
<feature type="chain" id="PRO_0000350608" description="Probable copper-transporting P-type ATPase B">
    <location>
        <begin position="1"/>
        <end position="674"/>
    </location>
</feature>
<feature type="transmembrane region" description="Helical" evidence="2">
    <location>
        <begin position="32"/>
        <end position="52"/>
    </location>
</feature>
<feature type="transmembrane region" description="Helical" evidence="2">
    <location>
        <begin position="57"/>
        <end position="77"/>
    </location>
</feature>
<feature type="transmembrane region" description="Helical" evidence="2">
    <location>
        <begin position="95"/>
        <end position="115"/>
    </location>
</feature>
<feature type="transmembrane region" description="Helical" evidence="2">
    <location>
        <begin position="127"/>
        <end position="147"/>
    </location>
</feature>
<feature type="transmembrane region" description="Helical" evidence="2">
    <location>
        <begin position="284"/>
        <end position="304"/>
    </location>
</feature>
<feature type="transmembrane region" description="Helical" evidence="2">
    <location>
        <begin position="315"/>
        <end position="335"/>
    </location>
</feature>
<feature type="transmembrane region" description="Helical" evidence="2">
    <location>
        <begin position="623"/>
        <end position="645"/>
    </location>
</feature>
<feature type="transmembrane region" description="Helical" evidence="2">
    <location>
        <begin position="649"/>
        <end position="671"/>
    </location>
</feature>
<feature type="region of interest" description="Disordered" evidence="3">
    <location>
        <begin position="1"/>
        <end position="20"/>
    </location>
</feature>
<feature type="active site" description="4-aspartylphosphate intermediate" evidence="1">
    <location>
        <position position="367"/>
    </location>
</feature>
<feature type="binding site" evidence="1">
    <location>
        <position position="565"/>
    </location>
    <ligand>
        <name>Mg(2+)</name>
        <dbReference type="ChEBI" id="CHEBI:18420"/>
    </ligand>
</feature>
<feature type="binding site" evidence="1">
    <location>
        <position position="569"/>
    </location>
    <ligand>
        <name>Mg(2+)</name>
        <dbReference type="ChEBI" id="CHEBI:18420"/>
    </ligand>
</feature>
<proteinExistence type="inferred from homology"/>
<protein>
    <recommendedName>
        <fullName>Probable copper-transporting P-type ATPase B</fullName>
        <ecNumber>7.2.2.8</ecNumber>
    </recommendedName>
</protein>